<dbReference type="EMBL" id="CP000013">
    <property type="protein sequence ID" value="AAU07545.1"/>
    <property type="molecule type" value="Genomic_DNA"/>
</dbReference>
<dbReference type="RefSeq" id="WP_011193998.1">
    <property type="nucleotide sequence ID" value="NZ_CP028872.1"/>
</dbReference>
<dbReference type="SMR" id="Q660H6"/>
<dbReference type="GeneID" id="45161493"/>
<dbReference type="KEGG" id="bga:BG0718"/>
<dbReference type="eggNOG" id="COG0228">
    <property type="taxonomic scope" value="Bacteria"/>
</dbReference>
<dbReference type="HOGENOM" id="CLU_100590_5_0_12"/>
<dbReference type="OrthoDB" id="9807878at2"/>
<dbReference type="Proteomes" id="UP000002276">
    <property type="component" value="Chromosome"/>
</dbReference>
<dbReference type="GO" id="GO:0005737">
    <property type="term" value="C:cytoplasm"/>
    <property type="evidence" value="ECO:0007669"/>
    <property type="project" value="UniProtKB-ARBA"/>
</dbReference>
<dbReference type="GO" id="GO:0015935">
    <property type="term" value="C:small ribosomal subunit"/>
    <property type="evidence" value="ECO:0007669"/>
    <property type="project" value="TreeGrafter"/>
</dbReference>
<dbReference type="GO" id="GO:0003735">
    <property type="term" value="F:structural constituent of ribosome"/>
    <property type="evidence" value="ECO:0007669"/>
    <property type="project" value="InterPro"/>
</dbReference>
<dbReference type="GO" id="GO:0006412">
    <property type="term" value="P:translation"/>
    <property type="evidence" value="ECO:0007669"/>
    <property type="project" value="UniProtKB-UniRule"/>
</dbReference>
<dbReference type="Gene3D" id="3.30.1320.10">
    <property type="match status" value="1"/>
</dbReference>
<dbReference type="HAMAP" id="MF_00385">
    <property type="entry name" value="Ribosomal_bS16"/>
    <property type="match status" value="1"/>
</dbReference>
<dbReference type="InterPro" id="IPR000307">
    <property type="entry name" value="Ribosomal_bS16"/>
</dbReference>
<dbReference type="InterPro" id="IPR020592">
    <property type="entry name" value="Ribosomal_bS16_CS"/>
</dbReference>
<dbReference type="InterPro" id="IPR023803">
    <property type="entry name" value="Ribosomal_bS16_dom_sf"/>
</dbReference>
<dbReference type="NCBIfam" id="TIGR00002">
    <property type="entry name" value="S16"/>
    <property type="match status" value="1"/>
</dbReference>
<dbReference type="PANTHER" id="PTHR12919">
    <property type="entry name" value="30S RIBOSOMAL PROTEIN S16"/>
    <property type="match status" value="1"/>
</dbReference>
<dbReference type="PANTHER" id="PTHR12919:SF20">
    <property type="entry name" value="SMALL RIBOSOMAL SUBUNIT PROTEIN BS16M"/>
    <property type="match status" value="1"/>
</dbReference>
<dbReference type="Pfam" id="PF00886">
    <property type="entry name" value="Ribosomal_S16"/>
    <property type="match status" value="1"/>
</dbReference>
<dbReference type="SUPFAM" id="SSF54565">
    <property type="entry name" value="Ribosomal protein S16"/>
    <property type="match status" value="1"/>
</dbReference>
<dbReference type="PROSITE" id="PS00732">
    <property type="entry name" value="RIBOSOMAL_S16"/>
    <property type="match status" value="1"/>
</dbReference>
<proteinExistence type="inferred from homology"/>
<sequence length="86" mass="10063">MSVRIRLKRMGAKKRPYYRIVVMNSASPRDGRAIEELGYYHPVEKQKQIKIKEDRMKDWISKGAILSDTVKMLLNKNNLNAKSQEV</sequence>
<reference key="1">
    <citation type="journal article" date="2004" name="Nucleic Acids Res.">
        <title>Comparative analysis of the Borrelia garinii genome.</title>
        <authorList>
            <person name="Gloeckner G."/>
            <person name="Lehmann R."/>
            <person name="Romualdi A."/>
            <person name="Pradella S."/>
            <person name="Schulte-Spechtel U."/>
            <person name="Schilhabel M."/>
            <person name="Wilske B."/>
            <person name="Suehnel J."/>
            <person name="Platzer M."/>
        </authorList>
    </citation>
    <scope>NUCLEOTIDE SEQUENCE [LARGE SCALE GENOMIC DNA]</scope>
    <source>
        <strain>ATCC BAA-2496 / DSM 23469 / PBi</strain>
    </source>
</reference>
<comment type="similarity">
    <text evidence="1">Belongs to the bacterial ribosomal protein bS16 family.</text>
</comment>
<accession>Q660H6</accession>
<name>RS16_BORGP</name>
<organism>
    <name type="scientific">Borrelia garinii subsp. bavariensis (strain ATCC BAA-2496 / DSM 23469 / PBi)</name>
    <name type="common">Borreliella bavariensis</name>
    <dbReference type="NCBI Taxonomy" id="290434"/>
    <lineage>
        <taxon>Bacteria</taxon>
        <taxon>Pseudomonadati</taxon>
        <taxon>Spirochaetota</taxon>
        <taxon>Spirochaetia</taxon>
        <taxon>Spirochaetales</taxon>
        <taxon>Borreliaceae</taxon>
        <taxon>Borreliella</taxon>
    </lineage>
</organism>
<evidence type="ECO:0000255" key="1">
    <source>
        <dbReference type="HAMAP-Rule" id="MF_00385"/>
    </source>
</evidence>
<evidence type="ECO:0000305" key="2"/>
<feature type="chain" id="PRO_0000243782" description="Small ribosomal subunit protein bS16">
    <location>
        <begin position="1"/>
        <end position="86"/>
    </location>
</feature>
<keyword id="KW-0687">Ribonucleoprotein</keyword>
<keyword id="KW-0689">Ribosomal protein</keyword>
<protein>
    <recommendedName>
        <fullName evidence="1">Small ribosomal subunit protein bS16</fullName>
    </recommendedName>
    <alternativeName>
        <fullName evidence="2">30S ribosomal protein S16</fullName>
    </alternativeName>
</protein>
<gene>
    <name evidence="1" type="primary">rpsP</name>
    <name type="ordered locus">BG0718</name>
</gene>